<name>DNJB6_BOVIN</name>
<comment type="function">
    <text evidence="2 4">Has a stimulatory effect on the ATPase activity of HSP70 in a dose-dependent and time-dependent manner and hence acts as a co-chaperone of HSP70 (By similarity). Plays an indispensable role in the organization of KRT8/KRT18 filaments (By similarity). Acts as an endogenous molecular chaperone for neuronal proteins including huntingtin (PubMed:11896048). Suppresses aggregation and toxicity of polyglutamine-containing, aggregation-prone proteins (By similarity). Also reduces cellular toxicity and caspase-3 activity (By similarity).</text>
</comment>
<comment type="subunit">
    <text evidence="1 2">Homooligomer. Interacts with BAG3, HSPB8 and STUB1 (By similarity). Interacts with ALKBH1 (By similarity). Interacts with HSP70, KRT18 and PTTG (By similarity).</text>
</comment>
<comment type="subcellular location">
    <subcellularLocation>
        <location evidence="2">Cytoplasm</location>
        <location evidence="2">Perinuclear region</location>
    </subcellularLocation>
    <subcellularLocation>
        <location evidence="2">Nucleus</location>
    </subcellularLocation>
    <subcellularLocation>
        <location evidence="2">Cytoplasm</location>
        <location evidence="2">Myofibril</location>
        <location evidence="2">Sarcomere</location>
        <location evidence="2">Z line</location>
    </subcellularLocation>
</comment>
<comment type="tissue specificity">
    <text evidence="4">Expressed in all tissues examined with highest expression in brain and retina and lower levels observed in testis, spleen, heart, liver and kidney.</text>
</comment>
<dbReference type="EMBL" id="AF426743">
    <property type="protein sequence ID" value="AAL73393.1"/>
    <property type="molecule type" value="mRNA"/>
</dbReference>
<dbReference type="EMBL" id="BC122622">
    <property type="protein sequence ID" value="AAI22623.1"/>
    <property type="molecule type" value="mRNA"/>
</dbReference>
<dbReference type="RefSeq" id="NP_776957.2">
    <property type="nucleotide sequence ID" value="NM_174532.3"/>
</dbReference>
<dbReference type="SMR" id="Q0III6"/>
<dbReference type="FunCoup" id="Q0III6">
    <property type="interactions" value="255"/>
</dbReference>
<dbReference type="STRING" id="9913.ENSBTAP00000060924"/>
<dbReference type="PaxDb" id="9913-ENSBTAP00000033245"/>
<dbReference type="GeneID" id="282215"/>
<dbReference type="KEGG" id="bta:282215"/>
<dbReference type="CTD" id="10049"/>
<dbReference type="eggNOG" id="KOG0714">
    <property type="taxonomic scope" value="Eukaryota"/>
</dbReference>
<dbReference type="HOGENOM" id="CLU_017633_12_0_1"/>
<dbReference type="InParanoid" id="Q0III6"/>
<dbReference type="OrthoDB" id="10250354at2759"/>
<dbReference type="Proteomes" id="UP000009136">
    <property type="component" value="Unplaced"/>
</dbReference>
<dbReference type="GO" id="GO:0005737">
    <property type="term" value="C:cytoplasm"/>
    <property type="evidence" value="ECO:0000318"/>
    <property type="project" value="GO_Central"/>
</dbReference>
<dbReference type="GO" id="GO:0005634">
    <property type="term" value="C:nucleus"/>
    <property type="evidence" value="ECO:0000318"/>
    <property type="project" value="GO_Central"/>
</dbReference>
<dbReference type="GO" id="GO:0048471">
    <property type="term" value="C:perinuclear region of cytoplasm"/>
    <property type="evidence" value="ECO:0007669"/>
    <property type="project" value="UniProtKB-SubCell"/>
</dbReference>
<dbReference type="GO" id="GO:0030018">
    <property type="term" value="C:Z disc"/>
    <property type="evidence" value="ECO:0000250"/>
    <property type="project" value="UniProtKB"/>
</dbReference>
<dbReference type="GO" id="GO:0030544">
    <property type="term" value="F:Hsp70 protein binding"/>
    <property type="evidence" value="ECO:0007669"/>
    <property type="project" value="InterPro"/>
</dbReference>
<dbReference type="GO" id="GO:0044183">
    <property type="term" value="F:protein folding chaperone"/>
    <property type="evidence" value="ECO:0000318"/>
    <property type="project" value="GO_Central"/>
</dbReference>
<dbReference type="GO" id="GO:0051087">
    <property type="term" value="F:protein-folding chaperone binding"/>
    <property type="evidence" value="ECO:0000318"/>
    <property type="project" value="GO_Central"/>
</dbReference>
<dbReference type="GO" id="GO:0051082">
    <property type="term" value="F:unfolded protein binding"/>
    <property type="evidence" value="ECO:0000318"/>
    <property type="project" value="GO_Central"/>
</dbReference>
<dbReference type="GO" id="GO:0061077">
    <property type="term" value="P:chaperone-mediated protein folding"/>
    <property type="evidence" value="ECO:0000318"/>
    <property type="project" value="GO_Central"/>
</dbReference>
<dbReference type="CDD" id="cd06257">
    <property type="entry name" value="DnaJ"/>
    <property type="match status" value="1"/>
</dbReference>
<dbReference type="FunFam" id="1.10.287.110:FF:000022">
    <property type="entry name" value="DnaJ homolog subfamily B member 6"/>
    <property type="match status" value="1"/>
</dbReference>
<dbReference type="Gene3D" id="1.10.287.110">
    <property type="entry name" value="DnaJ domain"/>
    <property type="match status" value="1"/>
</dbReference>
<dbReference type="InterPro" id="IPR001623">
    <property type="entry name" value="DnaJ_domain"/>
</dbReference>
<dbReference type="InterPro" id="IPR018253">
    <property type="entry name" value="DnaJ_domain_CS"/>
</dbReference>
<dbReference type="InterPro" id="IPR043183">
    <property type="entry name" value="DNJB2/6-like"/>
</dbReference>
<dbReference type="InterPro" id="IPR036869">
    <property type="entry name" value="J_dom_sf"/>
</dbReference>
<dbReference type="PANTHER" id="PTHR45168">
    <property type="entry name" value="DNAJ HOMOLOG SUBFAMILY B MEMBER 2"/>
    <property type="match status" value="1"/>
</dbReference>
<dbReference type="PANTHER" id="PTHR45168:SF4">
    <property type="entry name" value="SIMILAR TO DNAJ HOMOLOG SUBFAMILY B MEMBER 6 (HEAT SHOCK PROTEIN J2) (HSJ-2) (MRJ) (MDJ4)"/>
    <property type="match status" value="1"/>
</dbReference>
<dbReference type="Pfam" id="PF00226">
    <property type="entry name" value="DnaJ"/>
    <property type="match status" value="1"/>
</dbReference>
<dbReference type="PRINTS" id="PR00625">
    <property type="entry name" value="JDOMAIN"/>
</dbReference>
<dbReference type="SMART" id="SM00271">
    <property type="entry name" value="DnaJ"/>
    <property type="match status" value="1"/>
</dbReference>
<dbReference type="SUPFAM" id="SSF46565">
    <property type="entry name" value="Chaperone J-domain"/>
    <property type="match status" value="1"/>
</dbReference>
<dbReference type="PROSITE" id="PS00636">
    <property type="entry name" value="DNAJ_1"/>
    <property type="match status" value="1"/>
</dbReference>
<dbReference type="PROSITE" id="PS50076">
    <property type="entry name" value="DNAJ_2"/>
    <property type="match status" value="1"/>
</dbReference>
<organism>
    <name type="scientific">Bos taurus</name>
    <name type="common">Bovine</name>
    <dbReference type="NCBI Taxonomy" id="9913"/>
    <lineage>
        <taxon>Eukaryota</taxon>
        <taxon>Metazoa</taxon>
        <taxon>Chordata</taxon>
        <taxon>Craniata</taxon>
        <taxon>Vertebrata</taxon>
        <taxon>Euteleostomi</taxon>
        <taxon>Mammalia</taxon>
        <taxon>Eutheria</taxon>
        <taxon>Laurasiatheria</taxon>
        <taxon>Artiodactyla</taxon>
        <taxon>Ruminantia</taxon>
        <taxon>Pecora</taxon>
        <taxon>Bovidae</taxon>
        <taxon>Bovinae</taxon>
        <taxon>Bos</taxon>
    </lineage>
</organism>
<feature type="chain" id="PRO_0000290022" description="DnaJ homolog subfamily B member 6">
    <location>
        <begin position="1"/>
        <end position="242"/>
    </location>
</feature>
<feature type="domain" description="J" evidence="3">
    <location>
        <begin position="2"/>
        <end position="69"/>
    </location>
</feature>
<feature type="region of interest" description="Interaction with HSP70" evidence="2">
    <location>
        <begin position="2"/>
        <end position="146"/>
    </location>
</feature>
<feature type="region of interest" description="Interaction with KRT18" evidence="2">
    <location>
        <begin position="119"/>
        <end position="242"/>
    </location>
</feature>
<feature type="modified residue" description="Omega-N-methylarginine" evidence="1">
    <location>
        <position position="135"/>
    </location>
</feature>
<feature type="sequence conflict" description="In Ref. 1; AAL73393." evidence="5" ref="1">
    <original>H</original>
    <variation>N</variation>
    <location>
        <position position="125"/>
    </location>
</feature>
<feature type="sequence conflict" description="In Ref. 1; AAL73393." evidence="5" ref="1">
    <original>GA</original>
    <variation>SL</variation>
    <location>
        <begin position="152"/>
        <end position="153"/>
    </location>
</feature>
<feature type="sequence conflict" description="In Ref. 1; AAL73393." evidence="5" ref="1">
    <original>G</original>
    <variation>S</variation>
    <location>
        <position position="201"/>
    </location>
</feature>
<gene>
    <name type="primary">DNAJB6</name>
    <name type="synonym">MRJ</name>
</gene>
<proteinExistence type="evidence at transcript level"/>
<protein>
    <recommendedName>
        <fullName>DnaJ homolog subfamily B member 6</fullName>
    </recommendedName>
    <alternativeName>
        <fullName>MRJ</fullName>
    </alternativeName>
</protein>
<evidence type="ECO:0000250" key="1">
    <source>
        <dbReference type="UniProtKB" id="O54946"/>
    </source>
</evidence>
<evidence type="ECO:0000250" key="2">
    <source>
        <dbReference type="UniProtKB" id="O75190"/>
    </source>
</evidence>
<evidence type="ECO:0000255" key="3">
    <source>
        <dbReference type="PROSITE-ProRule" id="PRU00286"/>
    </source>
</evidence>
<evidence type="ECO:0000269" key="4">
    <source>
    </source>
</evidence>
<evidence type="ECO:0000305" key="5"/>
<sequence>MVDYYEVLGVQRHASAEDIKKAYRKLALKWHPDKNPENKEEAERKFKQVAEAYEVLSDAKKRDIYDRYGKEGLNGGGGGGSHFDSPFEFGFTFRNPEDVFREFFGGRDPFSFDFFEDPFEDFFGHRRGPRGSRSRGTGSFFSTFSGFPSFGGAFPSFDAGFSSFGSLGHGGLTAFSSSSAFGGSGMGNYKSISTSTKVVNGRKITTKRIVENGQERVEVEEDGQLKSLTINGKEQLLRLDNK</sequence>
<reference key="1">
    <citation type="journal article" date="2002" name="J. Biol. Chem.">
        <title>Characterization of a brain-enriched chaperone, MRJ, that inhibits Huntingtin aggregation and toxicity independently.</title>
        <authorList>
            <person name="Chuang J.-Z."/>
            <person name="Zhou H."/>
            <person name="Zhu M."/>
            <person name="Li S.-H."/>
            <person name="Li X.-J."/>
            <person name="Sung C.-H."/>
        </authorList>
    </citation>
    <scope>NUCLEOTIDE SEQUENCE [MRNA]</scope>
    <scope>FUNCTION</scope>
    <scope>TISSUE SPECIFICITY</scope>
    <source>
        <tissue>Retina</tissue>
    </source>
</reference>
<reference key="2">
    <citation type="submission" date="2006-08" db="EMBL/GenBank/DDBJ databases">
        <authorList>
            <consortium name="NIH - Mammalian Gene Collection (MGC) project"/>
        </authorList>
    </citation>
    <scope>NUCLEOTIDE SEQUENCE [LARGE SCALE MRNA]</scope>
    <source>
        <strain>Hereford</strain>
        <tissue>Basal ganglia</tissue>
    </source>
</reference>
<accession>Q0III6</accession>
<accession>Q8WN90</accession>
<keyword id="KW-0143">Chaperone</keyword>
<keyword id="KW-0963">Cytoplasm</keyword>
<keyword id="KW-0488">Methylation</keyword>
<keyword id="KW-0539">Nucleus</keyword>
<keyword id="KW-1185">Reference proteome</keyword>